<name>GAG_SRV2</name>
<keyword id="KW-0167">Capsid protein</keyword>
<keyword id="KW-0175">Coiled coil</keyword>
<keyword id="KW-0945">Host-virus interaction</keyword>
<keyword id="KW-0449">Lipoprotein</keyword>
<keyword id="KW-0479">Metal-binding</keyword>
<keyword id="KW-0519">Myristate</keyword>
<keyword id="KW-0597">Phosphoprotein</keyword>
<keyword id="KW-0677">Repeat</keyword>
<keyword id="KW-0688">Ribosomal frameshifting</keyword>
<keyword id="KW-1198">Viral budding</keyword>
<keyword id="KW-1187">Viral budding via the host ESCRT complexes</keyword>
<keyword id="KW-0468">Viral matrix protein</keyword>
<keyword id="KW-0543">Viral nucleoprotein</keyword>
<keyword id="KW-1188">Viral release from host cell</keyword>
<keyword id="KW-0946">Virion</keyword>
<keyword id="KW-0862">Zinc</keyword>
<keyword id="KW-0863">Zinc-finger</keyword>
<feature type="initiator methionine" description="Removed; by host" evidence="1">
    <location>
        <position position="1"/>
    </location>
</feature>
<feature type="chain" id="PRO_0000443128" description="Gag polyprotein" evidence="1">
    <location>
        <begin position="2"/>
        <end position="654"/>
    </location>
</feature>
<feature type="chain" id="PRO_0000040971" description="Matrix protein p10" evidence="1">
    <location>
        <begin position="2"/>
        <end position="100"/>
    </location>
</feature>
<feature type="chain" id="PRO_0000443129" description="Phosphorylated protein pp24" evidence="1">
    <location>
        <begin position="101"/>
        <end position="214"/>
    </location>
</feature>
<feature type="propeptide" id="PRO_0000040972" evidence="3">
    <location>
        <begin position="101"/>
        <end position="152"/>
    </location>
</feature>
<feature type="chain" id="PRO_0000040973" description="Phosphorylated protein pp18" evidence="1">
    <location>
        <begin position="160"/>
        <end position="214"/>
    </location>
</feature>
<feature type="chain" id="PRO_0000040974" description="p12" evidence="1">
    <location>
        <begin position="215"/>
        <end position="297"/>
    </location>
</feature>
<feature type="chain" id="PRO_0000040975" description="Capsid protein p27" evidence="1">
    <location>
        <begin position="298"/>
        <end position="523"/>
    </location>
</feature>
<feature type="chain" id="PRO_0000040976" description="Nucleocapsid protein p14" evidence="1">
    <location>
        <begin position="524"/>
        <end position="618"/>
    </location>
</feature>
<feature type="chain" id="PRO_0000040977" description="p4" evidence="1">
    <location>
        <begin position="619"/>
        <end position="654"/>
    </location>
</feature>
<feature type="zinc finger region" description="CCHC-type 1" evidence="4">
    <location>
        <begin position="544"/>
        <end position="561"/>
    </location>
</feature>
<feature type="zinc finger region" description="CCHC-type 2" evidence="4">
    <location>
        <begin position="573"/>
        <end position="590"/>
    </location>
</feature>
<feature type="region of interest" description="Disordered" evidence="5">
    <location>
        <begin position="132"/>
        <end position="152"/>
    </location>
</feature>
<feature type="region of interest" description="Disordered" evidence="5">
    <location>
        <begin position="588"/>
        <end position="654"/>
    </location>
</feature>
<feature type="coiled-coil region" evidence="3">
    <location>
        <begin position="215"/>
        <end position="251"/>
    </location>
</feature>
<feature type="short sequence motif" description="PPXY motif" evidence="1">
    <location>
        <begin position="200"/>
        <end position="203"/>
    </location>
</feature>
<feature type="site" description="Cleavage; by viral protease" evidence="1">
    <location>
        <begin position="100"/>
        <end position="101"/>
    </location>
</feature>
<feature type="site" description="Cleavage; by viral protease" evidence="1">
    <location>
        <begin position="160"/>
        <end position="161"/>
    </location>
</feature>
<feature type="site" description="Cleavage; by viral protease" evidence="1">
    <location>
        <begin position="214"/>
        <end position="215"/>
    </location>
</feature>
<feature type="site" description="Cleavage; by viral protease" evidence="1">
    <location>
        <begin position="297"/>
        <end position="298"/>
    </location>
</feature>
<feature type="site" description="Cleavage; by viral protease" evidence="1">
    <location>
        <begin position="523"/>
        <end position="524"/>
    </location>
</feature>
<feature type="site" description="Cleavage; by viral protease" evidence="1">
    <location>
        <begin position="618"/>
        <end position="619"/>
    </location>
</feature>
<feature type="lipid moiety-binding region" description="N-myristoyl glycine; by host" evidence="2">
    <location>
        <position position="2"/>
    </location>
</feature>
<comment type="function">
    <molecule>Matrix protein p10</molecule>
    <text evidence="6">Matrix protein.</text>
</comment>
<comment type="function">
    <molecule>Nucleocapsid protein p14</molecule>
    <text evidence="6">Nucleocapsid protein.</text>
</comment>
<comment type="function">
    <molecule>Capsid protein p27</molecule>
    <text evidence="6">Capsid protein.</text>
</comment>
<comment type="subcellular location">
    <molecule>Matrix protein p10</molecule>
    <subcellularLocation>
        <location evidence="6">Virion</location>
    </subcellularLocation>
</comment>
<comment type="subcellular location">
    <molecule>Capsid protein p27</molecule>
    <subcellularLocation>
        <location evidence="6">Virion</location>
    </subcellularLocation>
</comment>
<comment type="subcellular location">
    <molecule>Nucleocapsid protein p14</molecule>
    <subcellularLocation>
        <location evidence="6">Virion</location>
    </subcellularLocation>
</comment>
<comment type="alternative products">
    <event type="ribosomal frameshifting"/>
    <isoform>
        <id>P51516-1</id>
        <name>Gag polyprotein</name>
        <sequence type="displayed"/>
    </isoform>
    <isoform>
        <id>P51518-1</id>
        <name>Gag-Pro polyprotein</name>
        <sequence type="external"/>
    </isoform>
    <isoform>
        <id>P51517-1</id>
        <name>Gag-Pro-Pol polyprotein</name>
        <sequence type="external"/>
    </isoform>
</comment>
<comment type="domain">
    <molecule>Gag polyprotein</molecule>
    <text evidence="1">Late-budding domains (L domains) are short sequence motifs essential for viral particle release. They can occur individually or in close proximity within structural proteins. They interacts with sorting cellular proteins of the multivesicular body (MVB) pathway. Most of these proteins are class E vacuolar protein sorting factors belonging to ESCRT-I, ESCRT-II or ESCRT-III complexes. Phosphorylated protein pp24 and phosphorylated protein pp18 contains one L domain: a PPXY motif which binds to the WW domains of the ubiquitin ligase NEDD4.</text>
</comment>
<comment type="PTM">
    <molecule>Gag polyprotein</molecule>
    <text evidence="2">Myristoylated. Myristoylation of the matrix (MA) domain mediates the transport and binding of Gag polyproteins to the host plasma membrane and is required for the assembly of viral particles.</text>
</comment>
<comment type="PTM">
    <molecule>Gag polyprotein</molecule>
    <text evidence="1">Specific enzymatic cleavages in vivo yield mature proteins.</text>
</comment>
<comment type="miscellaneous">
    <molecule>Isoform Gag polyprotein</molecule>
    <text evidence="7">Produced by conventional translation.</text>
</comment>
<comment type="sequence caution" evidence="6">
    <conflict type="erroneous initiation">
        <sequence resource="EMBL-CDS" id="AAA47561"/>
    </conflict>
</comment>
<sequence length="654" mass="73220">MGQELSQHELYVEQLKKALKTRGVKVKGNDLLKFFDFVKDTCPWFPQEGTIDIKRWRRVGDCFQDYYNTFGPEKIPVTAFSYWNLIKDLIDKKEADPQVMAAVTQTEKILKVSSQTDLRDNSHNKDMDLISLESDDEEAKAPSEKMTMSNKSPKKYPAMLASQNNNTDKDPDLSEVDWDGLEDEAAKYHNPDWPPFLSRPPPYNRTAATAPAVMAVVNPKEELKEKISQLEEQIKLEELHQSLIIRLQKLKTGNERVTSSGNIESHSRTPKWPGQCLPKGKYLINKNTEEYPPKDIFPVTETMDGQGQAWRHHNGFDFTVIKELKTAVSQYGATAPYTLAIVESIADNWLTPTDWNTLVRAVLSGGDHLIWKSEFFENCRDTAKRNQQAGNGWDFDMLTGSGNYANTDAQMQYDPGLFAQIQAAATNAWRKLPVKGDPGASLTGVKQGPDEPFADFVHRLITTAGRIFGNAEAGVDYVKQLAYENANPACQAAIRPYRKKTDLTGYIRLCSDIGPSYQQGLAMAAAFSGQTVKDLLNNKNKDRGGCFKCGKKGHFAKDCRDHSNKNPESKVPGLCPRCKRGKHWANECKSKTDSQGNPLPPHQGNGMRGQPQAPKQAYGAVSFVPANSNNPFQNLIEPPQEVQDWTSVPPPTQY</sequence>
<reference key="1">
    <citation type="journal article" date="1987" name="Virology">
        <title>Sequence relationships of type D retroviruses which cause simian acquired immunodeficiency syndrome.</title>
        <authorList>
            <person name="Thayer R.M."/>
            <person name="Power M.D."/>
            <person name="Bryant M.L."/>
            <person name="Gardner M.B."/>
            <person name="Barr P.J."/>
            <person name="Luciw P.A."/>
        </authorList>
    </citation>
    <scope>NUCLEOTIDE SEQUENCE [GENOMIC RNA]</scope>
</reference>
<reference key="2">
    <citation type="journal article" date="2013" name="Biomed. Res. Int.">
        <title>A genome-wide analysis of RNA pseudoknots that stimulate efficient -1 ribosomal frameshifting or readthrough in animal viruses.</title>
        <authorList>
            <person name="Huang X."/>
            <person name="Cheng Q."/>
            <person name="Du Z."/>
        </authorList>
    </citation>
    <scope>RIBOSOMAL FRAMESHIFT</scope>
</reference>
<dbReference type="EMBL" id="M16605">
    <property type="protein sequence ID" value="AAA47561.1"/>
    <property type="status" value="ALT_INIT"/>
    <property type="molecule type" value="Genomic_RNA"/>
</dbReference>
<dbReference type="SMR" id="P51516"/>
<dbReference type="Proteomes" id="UP000007229">
    <property type="component" value="Genome"/>
</dbReference>
<dbReference type="GO" id="GO:0019013">
    <property type="term" value="C:viral nucleocapsid"/>
    <property type="evidence" value="ECO:0007669"/>
    <property type="project" value="UniProtKB-KW"/>
</dbReference>
<dbReference type="GO" id="GO:0003676">
    <property type="term" value="F:nucleic acid binding"/>
    <property type="evidence" value="ECO:0007669"/>
    <property type="project" value="InterPro"/>
</dbReference>
<dbReference type="GO" id="GO:0039660">
    <property type="term" value="F:structural constituent of virion"/>
    <property type="evidence" value="ECO:0007669"/>
    <property type="project" value="UniProtKB-KW"/>
</dbReference>
<dbReference type="GO" id="GO:0008270">
    <property type="term" value="F:zinc ion binding"/>
    <property type="evidence" value="ECO:0007669"/>
    <property type="project" value="UniProtKB-KW"/>
</dbReference>
<dbReference type="GO" id="GO:0039702">
    <property type="term" value="P:viral budding via host ESCRT complex"/>
    <property type="evidence" value="ECO:0007669"/>
    <property type="project" value="UniProtKB-KW"/>
</dbReference>
<dbReference type="GO" id="GO:0075523">
    <property type="term" value="P:viral translational frameshifting"/>
    <property type="evidence" value="ECO:0007669"/>
    <property type="project" value="UniProtKB-KW"/>
</dbReference>
<dbReference type="FunFam" id="4.10.60.10:FF:000036">
    <property type="entry name" value="Gag polyprotein"/>
    <property type="match status" value="1"/>
</dbReference>
<dbReference type="Gene3D" id="1.10.1200.30">
    <property type="match status" value="1"/>
</dbReference>
<dbReference type="Gene3D" id="1.10.375.10">
    <property type="entry name" value="Human Immunodeficiency Virus Type 1 Capsid Protein"/>
    <property type="match status" value="1"/>
</dbReference>
<dbReference type="Gene3D" id="1.10.150.490">
    <property type="entry name" value="Retroviral GAG p10 protein"/>
    <property type="match status" value="1"/>
</dbReference>
<dbReference type="Gene3D" id="4.10.60.10">
    <property type="entry name" value="Zinc finger, CCHC-type"/>
    <property type="match status" value="1"/>
</dbReference>
<dbReference type="InterPro" id="IPR003322">
    <property type="entry name" value="B_retro_matrix"/>
</dbReference>
<dbReference type="InterPro" id="IPR038124">
    <property type="entry name" value="B_retro_matrix_sf"/>
</dbReference>
<dbReference type="InterPro" id="IPR045345">
    <property type="entry name" value="Gag_p24_C"/>
</dbReference>
<dbReference type="InterPro" id="IPR050195">
    <property type="entry name" value="Primate_lentivir_Gag_pol-like"/>
</dbReference>
<dbReference type="InterPro" id="IPR008916">
    <property type="entry name" value="Retrov_capsid_C"/>
</dbReference>
<dbReference type="InterPro" id="IPR008919">
    <property type="entry name" value="Retrov_capsid_N"/>
</dbReference>
<dbReference type="InterPro" id="IPR010999">
    <property type="entry name" value="Retrovr_matrix"/>
</dbReference>
<dbReference type="InterPro" id="IPR001878">
    <property type="entry name" value="Znf_CCHC"/>
</dbReference>
<dbReference type="InterPro" id="IPR036875">
    <property type="entry name" value="Znf_CCHC_sf"/>
</dbReference>
<dbReference type="PANTHER" id="PTHR40389">
    <property type="entry name" value="ENDOGENOUS RETROVIRUS GROUP K MEMBER 24 GAG POLYPROTEIN-RELATED"/>
    <property type="match status" value="1"/>
</dbReference>
<dbReference type="PANTHER" id="PTHR40389:SF3">
    <property type="entry name" value="IGE-BINDING PROTEIN"/>
    <property type="match status" value="1"/>
</dbReference>
<dbReference type="Pfam" id="PF02337">
    <property type="entry name" value="Gag_p10"/>
    <property type="match status" value="1"/>
</dbReference>
<dbReference type="Pfam" id="PF00607">
    <property type="entry name" value="Gag_p24"/>
    <property type="match status" value="1"/>
</dbReference>
<dbReference type="Pfam" id="PF19317">
    <property type="entry name" value="Gag_p24_C"/>
    <property type="match status" value="1"/>
</dbReference>
<dbReference type="Pfam" id="PF00098">
    <property type="entry name" value="zf-CCHC"/>
    <property type="match status" value="1"/>
</dbReference>
<dbReference type="Pfam" id="PF14787">
    <property type="entry name" value="zf-CCHC_5"/>
    <property type="match status" value="1"/>
</dbReference>
<dbReference type="SMART" id="SM00343">
    <property type="entry name" value="ZnF_C2HC"/>
    <property type="match status" value="2"/>
</dbReference>
<dbReference type="SUPFAM" id="SSF47836">
    <property type="entry name" value="Retroviral matrix proteins"/>
    <property type="match status" value="1"/>
</dbReference>
<dbReference type="SUPFAM" id="SSF47353">
    <property type="entry name" value="Retrovirus capsid dimerization domain-like"/>
    <property type="match status" value="1"/>
</dbReference>
<dbReference type="SUPFAM" id="SSF47943">
    <property type="entry name" value="Retrovirus capsid protein, N-terminal core domain"/>
    <property type="match status" value="1"/>
</dbReference>
<dbReference type="SUPFAM" id="SSF57756">
    <property type="entry name" value="Retrovirus zinc finger-like domains"/>
    <property type="match status" value="2"/>
</dbReference>
<dbReference type="PROSITE" id="PS50158">
    <property type="entry name" value="ZF_CCHC"/>
    <property type="match status" value="1"/>
</dbReference>
<accession>P51516</accession>
<organism>
    <name type="scientific">Simian retrovirus SRV-2</name>
    <dbReference type="NCBI Taxonomy" id="39068"/>
    <lineage>
        <taxon>Viruses</taxon>
        <taxon>Riboviria</taxon>
        <taxon>Pararnavirae</taxon>
        <taxon>Artverviricota</taxon>
        <taxon>Revtraviricetes</taxon>
        <taxon>Ortervirales</taxon>
        <taxon>Retroviridae</taxon>
        <taxon>Orthoretrovirinae</taxon>
        <taxon>Betaretrovirus</taxon>
        <taxon>Mason-Pfizer monkey virus</taxon>
    </lineage>
</organism>
<organismHost>
    <name type="scientific">Macaca mulatta</name>
    <name type="common">Rhesus macaque</name>
    <dbReference type="NCBI Taxonomy" id="9544"/>
</organismHost>
<gene>
    <name type="primary">gag</name>
</gene>
<evidence type="ECO:0000250" key="1">
    <source>
        <dbReference type="UniProtKB" id="P07567"/>
    </source>
</evidence>
<evidence type="ECO:0000250" key="2">
    <source>
        <dbReference type="UniProtKB" id="P10258"/>
    </source>
</evidence>
<evidence type="ECO:0000255" key="3"/>
<evidence type="ECO:0000255" key="4">
    <source>
        <dbReference type="PROSITE-ProRule" id="PRU00047"/>
    </source>
</evidence>
<evidence type="ECO:0000256" key="5">
    <source>
        <dbReference type="SAM" id="MobiDB-lite"/>
    </source>
</evidence>
<evidence type="ECO:0000305" key="6"/>
<evidence type="ECO:0000305" key="7">
    <source>
    </source>
</evidence>
<proteinExistence type="inferred from homology"/>
<protein>
    <recommendedName>
        <fullName>Gag polyprotein</fullName>
    </recommendedName>
    <alternativeName>
        <fullName>Core polyprotein</fullName>
    </alternativeName>
    <component>
        <recommendedName>
            <fullName>Matrix protein p10</fullName>
        </recommendedName>
    </component>
    <component>
        <recommendedName>
            <fullName>Phosphorylated protein pp24</fullName>
        </recommendedName>
    </component>
    <component>
        <recommendedName>
            <fullName>Phosphorylated protein pp18</fullName>
        </recommendedName>
    </component>
    <component>
        <recommendedName>
            <fullName>p12</fullName>
        </recommendedName>
    </component>
    <component>
        <recommendedName>
            <fullName>Capsid protein p27</fullName>
        </recommendedName>
    </component>
    <component>
        <recommendedName>
            <fullName>Nucleocapsid protein p14</fullName>
        </recommendedName>
    </component>
    <component>
        <recommendedName>
            <fullName>p4</fullName>
        </recommendedName>
    </component>
</protein>